<protein>
    <recommendedName>
        <fullName evidence="1">Aspartate carbamoyltransferase regulatory chain</fullName>
    </recommendedName>
</protein>
<reference key="1">
    <citation type="journal article" date="2006" name="J. Bacteriol.">
        <title>Complete genome sequence of Yersinia pestis strains Antiqua and Nepal516: evidence of gene reduction in an emerging pathogen.</title>
        <authorList>
            <person name="Chain P.S.G."/>
            <person name="Hu P."/>
            <person name="Malfatti S.A."/>
            <person name="Radnedge L."/>
            <person name="Larimer F."/>
            <person name="Vergez L.M."/>
            <person name="Worsham P."/>
            <person name="Chu M.C."/>
            <person name="Andersen G.L."/>
        </authorList>
    </citation>
    <scope>NUCLEOTIDE SEQUENCE [LARGE SCALE GENOMIC DNA]</scope>
    <source>
        <strain>Antiqua</strain>
    </source>
</reference>
<proteinExistence type="inferred from homology"/>
<evidence type="ECO:0000255" key="1">
    <source>
        <dbReference type="HAMAP-Rule" id="MF_00002"/>
    </source>
</evidence>
<keyword id="KW-0479">Metal-binding</keyword>
<keyword id="KW-0665">Pyrimidine biosynthesis</keyword>
<keyword id="KW-0862">Zinc</keyword>
<name>PYRI_YERPA</name>
<gene>
    <name evidence="1" type="primary">pyrI</name>
    <name type="ordered locus">YPA_3714</name>
</gene>
<comment type="function">
    <text evidence="1">Involved in allosteric regulation of aspartate carbamoyltransferase.</text>
</comment>
<comment type="cofactor">
    <cofactor evidence="1">
        <name>Zn(2+)</name>
        <dbReference type="ChEBI" id="CHEBI:29105"/>
    </cofactor>
    <text evidence="1">Binds 1 zinc ion per subunit.</text>
</comment>
<comment type="subunit">
    <text evidence="1">Contains catalytic and regulatory chains.</text>
</comment>
<comment type="similarity">
    <text evidence="1">Belongs to the PyrI family.</text>
</comment>
<sequence>MMTQDYKLQVEAIKCGTVIDHIPAQIGFKLLSLFKLTATDQRITIGLNLPSKRSGRKDLIKIENTFLTEQQANQLAMYAPDATVNRIDNYEVVKKLTLSLPERIDAVLTCPNSNCISHNEPVDSSFTVKAQRGEISLKCKYCEKEFDHLTVLHAD</sequence>
<feature type="chain" id="PRO_1000000057" description="Aspartate carbamoyltransferase regulatory chain">
    <location>
        <begin position="1"/>
        <end position="155"/>
    </location>
</feature>
<feature type="binding site" evidence="1">
    <location>
        <position position="110"/>
    </location>
    <ligand>
        <name>Zn(2+)</name>
        <dbReference type="ChEBI" id="CHEBI:29105"/>
    </ligand>
</feature>
<feature type="binding site" evidence="1">
    <location>
        <position position="115"/>
    </location>
    <ligand>
        <name>Zn(2+)</name>
        <dbReference type="ChEBI" id="CHEBI:29105"/>
    </ligand>
</feature>
<feature type="binding site" evidence="1">
    <location>
        <position position="139"/>
    </location>
    <ligand>
        <name>Zn(2+)</name>
        <dbReference type="ChEBI" id="CHEBI:29105"/>
    </ligand>
</feature>
<feature type="binding site" evidence="1">
    <location>
        <position position="142"/>
    </location>
    <ligand>
        <name>Zn(2+)</name>
        <dbReference type="ChEBI" id="CHEBI:29105"/>
    </ligand>
</feature>
<dbReference type="EMBL" id="CP000308">
    <property type="protein sequence ID" value="ABG15676.1"/>
    <property type="molecule type" value="Genomic_DNA"/>
</dbReference>
<dbReference type="SMR" id="Q1C1J6"/>
<dbReference type="KEGG" id="ypa:YPA_3714"/>
<dbReference type="Proteomes" id="UP000001971">
    <property type="component" value="Chromosome"/>
</dbReference>
<dbReference type="GO" id="GO:0009347">
    <property type="term" value="C:aspartate carbamoyltransferase complex"/>
    <property type="evidence" value="ECO:0007669"/>
    <property type="project" value="InterPro"/>
</dbReference>
<dbReference type="GO" id="GO:0046872">
    <property type="term" value="F:metal ion binding"/>
    <property type="evidence" value="ECO:0007669"/>
    <property type="project" value="UniProtKB-KW"/>
</dbReference>
<dbReference type="GO" id="GO:0006207">
    <property type="term" value="P:'de novo' pyrimidine nucleobase biosynthetic process"/>
    <property type="evidence" value="ECO:0007669"/>
    <property type="project" value="InterPro"/>
</dbReference>
<dbReference type="GO" id="GO:0006221">
    <property type="term" value="P:pyrimidine nucleotide biosynthetic process"/>
    <property type="evidence" value="ECO:0007669"/>
    <property type="project" value="UniProtKB-UniRule"/>
</dbReference>
<dbReference type="FunFam" id="3.30.70.140:FF:000001">
    <property type="entry name" value="Aspartate carbamoyltransferase regulatory chain"/>
    <property type="match status" value="1"/>
</dbReference>
<dbReference type="Gene3D" id="2.30.30.20">
    <property type="entry name" value="Aspartate carbamoyltransferase regulatory subunit, C-terminal domain"/>
    <property type="match status" value="1"/>
</dbReference>
<dbReference type="Gene3D" id="3.30.70.140">
    <property type="entry name" value="Aspartate carbamoyltransferase regulatory subunit, N-terminal domain"/>
    <property type="match status" value="1"/>
</dbReference>
<dbReference type="HAMAP" id="MF_00002">
    <property type="entry name" value="Asp_carb_tr_reg"/>
    <property type="match status" value="1"/>
</dbReference>
<dbReference type="InterPro" id="IPR020545">
    <property type="entry name" value="Asp_carbamoyltransf_reg_N"/>
</dbReference>
<dbReference type="InterPro" id="IPR002801">
    <property type="entry name" value="Asp_carbamoylTrfase_reg"/>
</dbReference>
<dbReference type="InterPro" id="IPR020542">
    <property type="entry name" value="Asp_carbamoyltrfase_reg_C"/>
</dbReference>
<dbReference type="InterPro" id="IPR036792">
    <property type="entry name" value="Asp_carbatrfase_reg_C_sf"/>
</dbReference>
<dbReference type="InterPro" id="IPR036793">
    <property type="entry name" value="Asp_carbatrfase_reg_N_sf"/>
</dbReference>
<dbReference type="NCBIfam" id="TIGR00240">
    <property type="entry name" value="ATCase_reg"/>
    <property type="match status" value="1"/>
</dbReference>
<dbReference type="PANTHER" id="PTHR35805">
    <property type="entry name" value="ASPARTATE CARBAMOYLTRANSFERASE REGULATORY CHAIN"/>
    <property type="match status" value="1"/>
</dbReference>
<dbReference type="PANTHER" id="PTHR35805:SF1">
    <property type="entry name" value="ASPARTATE CARBAMOYLTRANSFERASE REGULATORY CHAIN"/>
    <property type="match status" value="1"/>
</dbReference>
<dbReference type="Pfam" id="PF01948">
    <property type="entry name" value="PyrI"/>
    <property type="match status" value="1"/>
</dbReference>
<dbReference type="Pfam" id="PF02748">
    <property type="entry name" value="PyrI_C"/>
    <property type="match status" value="1"/>
</dbReference>
<dbReference type="SUPFAM" id="SSF57825">
    <property type="entry name" value="Aspartate carbamoyltransferase, Regulatory-chain, C-terminal domain"/>
    <property type="match status" value="1"/>
</dbReference>
<dbReference type="SUPFAM" id="SSF54893">
    <property type="entry name" value="Aspartate carbamoyltransferase, Regulatory-chain, N-terminal domain"/>
    <property type="match status" value="1"/>
</dbReference>
<accession>Q1C1J6</accession>
<organism>
    <name type="scientific">Yersinia pestis bv. Antiqua (strain Antiqua)</name>
    <dbReference type="NCBI Taxonomy" id="360102"/>
    <lineage>
        <taxon>Bacteria</taxon>
        <taxon>Pseudomonadati</taxon>
        <taxon>Pseudomonadota</taxon>
        <taxon>Gammaproteobacteria</taxon>
        <taxon>Enterobacterales</taxon>
        <taxon>Yersiniaceae</taxon>
        <taxon>Yersinia</taxon>
    </lineage>
</organism>